<sequence>MDAKIGQFFDSVGTFFSGSDKIPWCDGDVIAGCEREVREATDSGTEDLKKECLMRLSWALVHSRQTEDVQRGIAMLEASLESSAPPLEDREKLYLLAVGYYRSGNYSRSRQLVDRCIEMQADWRQALVLKKTIEDKITKDGVIGIGITATAFGAVGLIAGGIVAAMSRKK</sequence>
<protein>
    <recommendedName>
        <fullName>Mitochondrial fission 1 protein A</fullName>
    </recommendedName>
    <alternativeName>
        <fullName>FIS1 homolog A</fullName>
        <shortName>AtFIS1a</shortName>
    </alternativeName>
    <alternativeName>
        <fullName>Protein BIGYIN 1</fullName>
    </alternativeName>
</protein>
<organism>
    <name type="scientific">Arabidopsis thaliana</name>
    <name type="common">Mouse-ear cress</name>
    <dbReference type="NCBI Taxonomy" id="3702"/>
    <lineage>
        <taxon>Eukaryota</taxon>
        <taxon>Viridiplantae</taxon>
        <taxon>Streptophyta</taxon>
        <taxon>Embryophyta</taxon>
        <taxon>Tracheophyta</taxon>
        <taxon>Spermatophyta</taxon>
        <taxon>Magnoliopsida</taxon>
        <taxon>eudicotyledons</taxon>
        <taxon>Gunneridae</taxon>
        <taxon>Pentapetalae</taxon>
        <taxon>rosids</taxon>
        <taxon>malvids</taxon>
        <taxon>Brassicales</taxon>
        <taxon>Brassicaceae</taxon>
        <taxon>Camelineae</taxon>
        <taxon>Arabidopsis</taxon>
    </lineage>
</organism>
<feature type="chain" id="PRO_0000422804" description="Mitochondrial fission 1 protein A">
    <location>
        <begin position="1"/>
        <end position="170"/>
    </location>
</feature>
<feature type="transmembrane region" description="Helical" evidence="1">
    <location>
        <begin position="142"/>
        <end position="162"/>
    </location>
</feature>
<feature type="repeat" description="TPR">
    <location>
        <begin position="90"/>
        <end position="123"/>
    </location>
</feature>
<reference key="1">
    <citation type="submission" date="2004-11" db="EMBL/GenBank/DDBJ databases">
        <title>Arabidopsis AtFIS1a is involved in the mitochondrial fission.</title>
        <authorList>
            <person name="Mori A."/>
            <person name="Fujimoto M."/>
            <person name="Tsutsumi N."/>
            <person name="Arimura S."/>
        </authorList>
    </citation>
    <scope>NUCLEOTIDE SEQUENCE [MRNA]</scope>
    <source>
        <strain>cv. Columbia</strain>
    </source>
</reference>
<reference key="2">
    <citation type="journal article" date="2000" name="Nature">
        <title>Sequence and analysis of chromosome 3 of the plant Arabidopsis thaliana.</title>
        <authorList>
            <person name="Salanoubat M."/>
            <person name="Lemcke K."/>
            <person name="Rieger M."/>
            <person name="Ansorge W."/>
            <person name="Unseld M."/>
            <person name="Fartmann B."/>
            <person name="Valle G."/>
            <person name="Bloecker H."/>
            <person name="Perez-Alonso M."/>
            <person name="Obermaier B."/>
            <person name="Delseny M."/>
            <person name="Boutry M."/>
            <person name="Grivell L.A."/>
            <person name="Mache R."/>
            <person name="Puigdomenech P."/>
            <person name="De Simone V."/>
            <person name="Choisne N."/>
            <person name="Artiguenave F."/>
            <person name="Robert C."/>
            <person name="Brottier P."/>
            <person name="Wincker P."/>
            <person name="Cattolico L."/>
            <person name="Weissenbach J."/>
            <person name="Saurin W."/>
            <person name="Quetier F."/>
            <person name="Schaefer M."/>
            <person name="Mueller-Auer S."/>
            <person name="Gabel C."/>
            <person name="Fuchs M."/>
            <person name="Benes V."/>
            <person name="Wurmbach E."/>
            <person name="Drzonek H."/>
            <person name="Erfle H."/>
            <person name="Jordan N."/>
            <person name="Bangert S."/>
            <person name="Wiedelmann R."/>
            <person name="Kranz H."/>
            <person name="Voss H."/>
            <person name="Holland R."/>
            <person name="Brandt P."/>
            <person name="Nyakatura G."/>
            <person name="Vezzi A."/>
            <person name="D'Angelo M."/>
            <person name="Pallavicini A."/>
            <person name="Toppo S."/>
            <person name="Simionati B."/>
            <person name="Conrad A."/>
            <person name="Hornischer K."/>
            <person name="Kauer G."/>
            <person name="Loehnert T.-H."/>
            <person name="Nordsiek G."/>
            <person name="Reichelt J."/>
            <person name="Scharfe M."/>
            <person name="Schoen O."/>
            <person name="Bargues M."/>
            <person name="Terol J."/>
            <person name="Climent J."/>
            <person name="Navarro P."/>
            <person name="Collado C."/>
            <person name="Perez-Perez A."/>
            <person name="Ottenwaelder B."/>
            <person name="Duchemin D."/>
            <person name="Cooke R."/>
            <person name="Laudie M."/>
            <person name="Berger-Llauro C."/>
            <person name="Purnelle B."/>
            <person name="Masuy D."/>
            <person name="de Haan M."/>
            <person name="Maarse A.C."/>
            <person name="Alcaraz J.-P."/>
            <person name="Cottet A."/>
            <person name="Casacuberta E."/>
            <person name="Monfort A."/>
            <person name="Argiriou A."/>
            <person name="Flores M."/>
            <person name="Liguori R."/>
            <person name="Vitale D."/>
            <person name="Mannhaupt G."/>
            <person name="Haase D."/>
            <person name="Schoof H."/>
            <person name="Rudd S."/>
            <person name="Zaccaria P."/>
            <person name="Mewes H.-W."/>
            <person name="Mayer K.F.X."/>
            <person name="Kaul S."/>
            <person name="Town C.D."/>
            <person name="Koo H.L."/>
            <person name="Tallon L.J."/>
            <person name="Jenkins J."/>
            <person name="Rooney T."/>
            <person name="Rizzo M."/>
            <person name="Walts A."/>
            <person name="Utterback T."/>
            <person name="Fujii C.Y."/>
            <person name="Shea T.P."/>
            <person name="Creasy T.H."/>
            <person name="Haas B."/>
            <person name="Maiti R."/>
            <person name="Wu D."/>
            <person name="Peterson J."/>
            <person name="Van Aken S."/>
            <person name="Pai G."/>
            <person name="Militscher J."/>
            <person name="Sellers P."/>
            <person name="Gill J.E."/>
            <person name="Feldblyum T.V."/>
            <person name="Preuss D."/>
            <person name="Lin X."/>
            <person name="Nierman W.C."/>
            <person name="Salzberg S.L."/>
            <person name="White O."/>
            <person name="Venter J.C."/>
            <person name="Fraser C.M."/>
            <person name="Kaneko T."/>
            <person name="Nakamura Y."/>
            <person name="Sato S."/>
            <person name="Kato T."/>
            <person name="Asamizu E."/>
            <person name="Sasamoto S."/>
            <person name="Kimura T."/>
            <person name="Idesawa K."/>
            <person name="Kawashima K."/>
            <person name="Kishida Y."/>
            <person name="Kiyokawa C."/>
            <person name="Kohara M."/>
            <person name="Matsumoto M."/>
            <person name="Matsuno A."/>
            <person name="Muraki A."/>
            <person name="Nakayama S."/>
            <person name="Nakazaki N."/>
            <person name="Shinpo S."/>
            <person name="Takeuchi C."/>
            <person name="Wada T."/>
            <person name="Watanabe A."/>
            <person name="Yamada M."/>
            <person name="Yasuda M."/>
            <person name="Tabata S."/>
        </authorList>
    </citation>
    <scope>NUCLEOTIDE SEQUENCE [LARGE SCALE GENOMIC DNA]</scope>
    <source>
        <strain>cv. Columbia</strain>
    </source>
</reference>
<reference key="3">
    <citation type="journal article" date="2017" name="Plant J.">
        <title>Araport11: a complete reannotation of the Arabidopsis thaliana reference genome.</title>
        <authorList>
            <person name="Cheng C.Y."/>
            <person name="Krishnakumar V."/>
            <person name="Chan A.P."/>
            <person name="Thibaud-Nissen F."/>
            <person name="Schobel S."/>
            <person name="Town C.D."/>
        </authorList>
    </citation>
    <scope>GENOME REANNOTATION</scope>
    <source>
        <strain>cv. Columbia</strain>
    </source>
</reference>
<reference key="4">
    <citation type="journal article" date="2003" name="Science">
        <title>Empirical analysis of transcriptional activity in the Arabidopsis genome.</title>
        <authorList>
            <person name="Yamada K."/>
            <person name="Lim J."/>
            <person name="Dale J.M."/>
            <person name="Chen H."/>
            <person name="Shinn P."/>
            <person name="Palm C.J."/>
            <person name="Southwick A.M."/>
            <person name="Wu H.C."/>
            <person name="Kim C.J."/>
            <person name="Nguyen M."/>
            <person name="Pham P.K."/>
            <person name="Cheuk R.F."/>
            <person name="Karlin-Newmann G."/>
            <person name="Liu S.X."/>
            <person name="Lam B."/>
            <person name="Sakano H."/>
            <person name="Wu T."/>
            <person name="Yu G."/>
            <person name="Miranda M."/>
            <person name="Quach H.L."/>
            <person name="Tripp M."/>
            <person name="Chang C.H."/>
            <person name="Lee J.M."/>
            <person name="Toriumi M.J."/>
            <person name="Chan M.M."/>
            <person name="Tang C.C."/>
            <person name="Onodera C.S."/>
            <person name="Deng J.M."/>
            <person name="Akiyama K."/>
            <person name="Ansari Y."/>
            <person name="Arakawa T."/>
            <person name="Banh J."/>
            <person name="Banno F."/>
            <person name="Bowser L."/>
            <person name="Brooks S.Y."/>
            <person name="Carninci P."/>
            <person name="Chao Q."/>
            <person name="Choy N."/>
            <person name="Enju A."/>
            <person name="Goldsmith A.D."/>
            <person name="Gurjal M."/>
            <person name="Hansen N.F."/>
            <person name="Hayashizaki Y."/>
            <person name="Johnson-Hopson C."/>
            <person name="Hsuan V.W."/>
            <person name="Iida K."/>
            <person name="Karnes M."/>
            <person name="Khan S."/>
            <person name="Koesema E."/>
            <person name="Ishida J."/>
            <person name="Jiang P.X."/>
            <person name="Jones T."/>
            <person name="Kawai J."/>
            <person name="Kamiya A."/>
            <person name="Meyers C."/>
            <person name="Nakajima M."/>
            <person name="Narusaka M."/>
            <person name="Seki M."/>
            <person name="Sakurai T."/>
            <person name="Satou M."/>
            <person name="Tamse R."/>
            <person name="Vaysberg M."/>
            <person name="Wallender E.K."/>
            <person name="Wong C."/>
            <person name="Yamamura Y."/>
            <person name="Yuan S."/>
            <person name="Shinozaki K."/>
            <person name="Davis R.W."/>
            <person name="Theologis A."/>
            <person name="Ecker J.R."/>
        </authorList>
    </citation>
    <scope>NUCLEOTIDE SEQUENCE [LARGE SCALE MRNA]</scope>
    <source>
        <strain>cv. Columbia</strain>
    </source>
</reference>
<reference key="5">
    <citation type="submission" date="2002-03" db="EMBL/GenBank/DDBJ databases">
        <title>Full-length cDNA from Arabidopsis thaliana.</title>
        <authorList>
            <person name="Brover V.V."/>
            <person name="Troukhan M.E."/>
            <person name="Alexandrov N.A."/>
            <person name="Lu Y.-P."/>
            <person name="Flavell R.B."/>
            <person name="Feldmann K.A."/>
        </authorList>
    </citation>
    <scope>NUCLEOTIDE SEQUENCE [LARGE SCALE MRNA]</scope>
</reference>
<reference key="6">
    <citation type="journal article" date="2006" name="J. Exp. Bot.">
        <title>BIGYIN, an orthologue of human and yeast FIS1 genes functions in the control of mitochondrial size and number in Arabidopsis thaliana.</title>
        <authorList>
            <person name="Scott I."/>
            <person name="Tobin A.K."/>
            <person name="Logan D.C."/>
        </authorList>
    </citation>
    <scope>FUNCTION</scope>
    <scope>DISRUPTION PHENOTYPE</scope>
</reference>
<reference key="7">
    <citation type="journal article" date="2008" name="Mol. Plant">
        <title>FISSION1A and FISSION1B proteins mediate the fission of peroxisomes and mitochondria in Arabidopsis.</title>
        <authorList>
            <person name="Zhang X.C."/>
            <person name="Hu J.P."/>
        </authorList>
    </citation>
    <scope>FUNCTION</scope>
    <scope>SUBCELLULAR LOCATION</scope>
    <scope>DOMAIN</scope>
    <scope>DISRUPTION PHENOTYPE</scope>
</reference>
<reference key="8">
    <citation type="journal article" date="2008" name="Plant Cell">
        <title>Arabidopsis PEROXIN11c-e, FISSION1b, and DYNAMIN-RELATED PROTEIN3A cooperate in cell cycle-associated replication of peroxisomes.</title>
        <authorList>
            <person name="Lingard M.J."/>
            <person name="Gidda S.K."/>
            <person name="Bingham S."/>
            <person name="Rothstein S.J."/>
            <person name="Mullen R.T."/>
            <person name="Trelease R.N."/>
        </authorList>
    </citation>
    <scope>SUBCELLULAR LOCATION</scope>
</reference>
<reference key="9">
    <citation type="journal article" date="2009" name="Plant J.">
        <title>Two small protein families, DYNAMIN-RELATED PROTEIN3 and FISSION1, are required for peroxisome fission in Arabidopsis.</title>
        <authorList>
            <person name="Zhang X."/>
            <person name="Hu J."/>
        </authorList>
    </citation>
    <scope>FUNCTION</scope>
    <scope>SUBCELLULAR LOCATION</scope>
    <scope>DISRUPTION PHENOTYPE</scope>
</reference>
<reference key="10">
    <citation type="journal article" date="2010" name="Plant Cell">
        <title>The Arabidopsis chloroplast division protein DYNAMIN-RELATED PROTEIN5B also mediates peroxisome division.</title>
        <authorList>
            <person name="Zhang X."/>
            <person name="Hu J."/>
        </authorList>
    </citation>
    <scope>INTERACTION WITH ARC5</scope>
    <scope>SUBCELLULAR LOCATION</scope>
</reference>
<name>FIS1A_ARATH</name>
<keyword id="KW-0472">Membrane</keyword>
<keyword id="KW-0496">Mitochondrion</keyword>
<keyword id="KW-1000">Mitochondrion outer membrane</keyword>
<keyword id="KW-0576">Peroxisome</keyword>
<keyword id="KW-0962">Peroxisome biogenesis</keyword>
<keyword id="KW-1185">Reference proteome</keyword>
<keyword id="KW-0802">TPR repeat</keyword>
<keyword id="KW-0812">Transmembrane</keyword>
<keyword id="KW-1133">Transmembrane helix</keyword>
<accession>Q9M1J1</accession>
<evidence type="ECO:0000255" key="1"/>
<evidence type="ECO:0000269" key="2">
    <source>
    </source>
</evidence>
<evidence type="ECO:0000269" key="3">
    <source>
    </source>
</evidence>
<evidence type="ECO:0000269" key="4">
    <source>
    </source>
</evidence>
<evidence type="ECO:0000269" key="5">
    <source>
    </source>
</evidence>
<evidence type="ECO:0000305" key="6"/>
<evidence type="ECO:0000305" key="7">
    <source>
    </source>
</evidence>
<dbReference type="EMBL" id="AB195717">
    <property type="protein sequence ID" value="BAE47515.1"/>
    <property type="molecule type" value="mRNA"/>
</dbReference>
<dbReference type="EMBL" id="AL138655">
    <property type="protein sequence ID" value="CAB72179.1"/>
    <property type="molecule type" value="Genomic_DNA"/>
</dbReference>
<dbReference type="EMBL" id="CP002686">
    <property type="protein sequence ID" value="AEE79613.1"/>
    <property type="molecule type" value="Genomic_DNA"/>
</dbReference>
<dbReference type="EMBL" id="CP002686">
    <property type="protein sequence ID" value="ANM65072.1"/>
    <property type="molecule type" value="Genomic_DNA"/>
</dbReference>
<dbReference type="EMBL" id="AY050354">
    <property type="protein sequence ID" value="AAK91371.1"/>
    <property type="molecule type" value="mRNA"/>
</dbReference>
<dbReference type="EMBL" id="AY097397">
    <property type="protein sequence ID" value="AAM19913.1"/>
    <property type="molecule type" value="mRNA"/>
</dbReference>
<dbReference type="EMBL" id="AY087545">
    <property type="protein sequence ID" value="AAM65087.1"/>
    <property type="molecule type" value="mRNA"/>
</dbReference>
<dbReference type="PIR" id="T47769">
    <property type="entry name" value="T47769"/>
</dbReference>
<dbReference type="RefSeq" id="NP_001327069.1">
    <property type="nucleotide sequence ID" value="NM_001339841.1"/>
</dbReference>
<dbReference type="RefSeq" id="NP_567044.1">
    <property type="nucleotide sequence ID" value="NM_115568.4"/>
</dbReference>
<dbReference type="SMR" id="Q9M1J1"/>
<dbReference type="BioGRID" id="10192">
    <property type="interactions" value="6"/>
</dbReference>
<dbReference type="FunCoup" id="Q9M1J1">
    <property type="interactions" value="3368"/>
</dbReference>
<dbReference type="IntAct" id="Q9M1J1">
    <property type="interactions" value="7"/>
</dbReference>
<dbReference type="STRING" id="3702.Q9M1J1"/>
<dbReference type="SwissPalm" id="Q9M1J1"/>
<dbReference type="PaxDb" id="3702-AT3G57090.1"/>
<dbReference type="ProteomicsDB" id="230099"/>
<dbReference type="EnsemblPlants" id="AT3G57090.1">
    <property type="protein sequence ID" value="AT3G57090.1"/>
    <property type="gene ID" value="AT3G57090"/>
</dbReference>
<dbReference type="EnsemblPlants" id="AT3G57090.2">
    <property type="protein sequence ID" value="AT3G57090.2"/>
    <property type="gene ID" value="AT3G57090"/>
</dbReference>
<dbReference type="GeneID" id="824876"/>
<dbReference type="Gramene" id="AT3G57090.1">
    <property type="protein sequence ID" value="AT3G57090.1"/>
    <property type="gene ID" value="AT3G57090"/>
</dbReference>
<dbReference type="Gramene" id="AT3G57090.2">
    <property type="protein sequence ID" value="AT3G57090.2"/>
    <property type="gene ID" value="AT3G57090"/>
</dbReference>
<dbReference type="KEGG" id="ath:AT3G57090"/>
<dbReference type="Araport" id="AT3G57090"/>
<dbReference type="TAIR" id="AT3G57090">
    <property type="gene designation" value="BIGYIN"/>
</dbReference>
<dbReference type="eggNOG" id="KOG3364">
    <property type="taxonomic scope" value="Eukaryota"/>
</dbReference>
<dbReference type="HOGENOM" id="CLU_104368_0_0_1"/>
<dbReference type="InParanoid" id="Q9M1J1"/>
<dbReference type="OMA" id="QFNYAWG"/>
<dbReference type="OrthoDB" id="421154at2759"/>
<dbReference type="PhylomeDB" id="Q9M1J1"/>
<dbReference type="PRO" id="PR:Q9M1J1"/>
<dbReference type="Proteomes" id="UP000006548">
    <property type="component" value="Chromosome 3"/>
</dbReference>
<dbReference type="ExpressionAtlas" id="Q9M1J1">
    <property type="expression patterns" value="baseline and differential"/>
</dbReference>
<dbReference type="GO" id="GO:0009507">
    <property type="term" value="C:chloroplast"/>
    <property type="evidence" value="ECO:0007005"/>
    <property type="project" value="TAIR"/>
</dbReference>
<dbReference type="GO" id="GO:0005829">
    <property type="term" value="C:cytosol"/>
    <property type="evidence" value="ECO:0007005"/>
    <property type="project" value="TAIR"/>
</dbReference>
<dbReference type="GO" id="GO:0005741">
    <property type="term" value="C:mitochondrial outer membrane"/>
    <property type="evidence" value="ECO:0007669"/>
    <property type="project" value="UniProtKB-SubCell"/>
</dbReference>
<dbReference type="GO" id="GO:0005739">
    <property type="term" value="C:mitochondrion"/>
    <property type="evidence" value="ECO:0000314"/>
    <property type="project" value="TAIR"/>
</dbReference>
<dbReference type="GO" id="GO:0005778">
    <property type="term" value="C:peroxisomal membrane"/>
    <property type="evidence" value="ECO:0007669"/>
    <property type="project" value="UniProtKB-SubCell"/>
</dbReference>
<dbReference type="GO" id="GO:0005777">
    <property type="term" value="C:peroxisome"/>
    <property type="evidence" value="ECO:0000314"/>
    <property type="project" value="UniProtKB"/>
</dbReference>
<dbReference type="GO" id="GO:0000266">
    <property type="term" value="P:mitochondrial fission"/>
    <property type="evidence" value="ECO:0007669"/>
    <property type="project" value="InterPro"/>
</dbReference>
<dbReference type="GO" id="GO:0007005">
    <property type="term" value="P:mitochondrion organization"/>
    <property type="evidence" value="ECO:0000315"/>
    <property type="project" value="TAIR"/>
</dbReference>
<dbReference type="GO" id="GO:0016559">
    <property type="term" value="P:peroxisome fission"/>
    <property type="evidence" value="ECO:0000315"/>
    <property type="project" value="TAIR"/>
</dbReference>
<dbReference type="CDD" id="cd12212">
    <property type="entry name" value="Fis1"/>
    <property type="match status" value="1"/>
</dbReference>
<dbReference type="FunFam" id="1.25.40.10:FF:000167">
    <property type="entry name" value="Mitochondrial fission 1 protein"/>
    <property type="match status" value="1"/>
</dbReference>
<dbReference type="Gene3D" id="1.25.40.10">
    <property type="entry name" value="Tetratricopeptide repeat domain"/>
    <property type="match status" value="1"/>
</dbReference>
<dbReference type="InterPro" id="IPR016543">
    <property type="entry name" value="Fis1"/>
</dbReference>
<dbReference type="InterPro" id="IPR033745">
    <property type="entry name" value="Fis1_cytosol"/>
</dbReference>
<dbReference type="InterPro" id="IPR028061">
    <property type="entry name" value="Fis1_TPR_C"/>
</dbReference>
<dbReference type="InterPro" id="IPR028058">
    <property type="entry name" value="Fis1_TPR_N"/>
</dbReference>
<dbReference type="InterPro" id="IPR011990">
    <property type="entry name" value="TPR-like_helical_dom_sf"/>
</dbReference>
<dbReference type="PANTHER" id="PTHR13247:SF0">
    <property type="entry name" value="MITOCHONDRIAL FISSION 1 PROTEIN"/>
    <property type="match status" value="1"/>
</dbReference>
<dbReference type="PANTHER" id="PTHR13247">
    <property type="entry name" value="TETRATRICOPEPTIDE REPEAT PROTEIN 11 TPR REPEAT PROTEIN 11"/>
    <property type="match status" value="1"/>
</dbReference>
<dbReference type="Pfam" id="PF14853">
    <property type="entry name" value="Fis1_TPR_C"/>
    <property type="match status" value="1"/>
</dbReference>
<dbReference type="Pfam" id="PF14852">
    <property type="entry name" value="Fis1_TPR_N"/>
    <property type="match status" value="1"/>
</dbReference>
<dbReference type="PIRSF" id="PIRSF008835">
    <property type="entry name" value="TPR_repeat_11_Fis1"/>
    <property type="match status" value="1"/>
</dbReference>
<dbReference type="SUPFAM" id="SSF48452">
    <property type="entry name" value="TPR-like"/>
    <property type="match status" value="1"/>
</dbReference>
<comment type="function">
    <text evidence="2 3 4">Component of the peroxisomal and mitochondrial division machineries. Plays a role in promoting the fission of mitochondria and peroxisomes.</text>
</comment>
<comment type="subunit">
    <text evidence="5">Interacts with ARC5.</text>
</comment>
<comment type="subcellular location">
    <subcellularLocation>
        <location>Mitochondrion outer membrane</location>
        <topology>Single-pass membrane protein</topology>
    </subcellularLocation>
    <subcellularLocation>
        <location evidence="6">Peroxisome membrane</location>
        <topology evidence="6">Single-pass membrane protein</topology>
    </subcellularLocation>
</comment>
<comment type="domain">
    <text evidence="4">The C-terminus is necessary for mitochondrial or peroxisomal targeting, while the N-terminus is necessary for mitochondrial or peroxisomal fission.</text>
</comment>
<comment type="disruption phenotype">
    <text evidence="2 3 4">Reduced plant growth. Increase in the size of mitochondria and decrease in the number of mitochondria per cell.</text>
</comment>
<comment type="miscellaneous">
    <text evidence="7">Overexpression of FIS1A increases the fission of peroxisomes and mitochondria.</text>
</comment>
<comment type="similarity">
    <text evidence="6">Belongs to the FIS1 family.</text>
</comment>
<gene>
    <name type="primary">FIS1A</name>
    <name type="synonym">BGY1</name>
    <name type="ordered locus">At3g57090</name>
    <name type="ORF">F24I3.1700</name>
</gene>
<proteinExistence type="evidence at protein level"/>